<dbReference type="EC" id="3.2.1.55"/>
<dbReference type="EMBL" id="AB073860">
    <property type="protein sequence ID" value="BAB71803.1"/>
    <property type="molecule type" value="Genomic_DNA"/>
</dbReference>
<dbReference type="EMBL" id="AB073861">
    <property type="protein sequence ID" value="BAB71804.1"/>
    <property type="molecule type" value="Genomic_DNA"/>
</dbReference>
<dbReference type="EMBL" id="BA000051">
    <property type="protein sequence ID" value="BAE58593.1"/>
    <property type="molecule type" value="Genomic_DNA"/>
</dbReference>
<dbReference type="RefSeq" id="XP_001820595.1">
    <property type="nucleotide sequence ID" value="XM_001820543.1"/>
</dbReference>
<dbReference type="SMR" id="Q2UIM2"/>
<dbReference type="STRING" id="510516.Q2UIM2"/>
<dbReference type="CAZy" id="CBM42">
    <property type="family name" value="Carbohydrate-Binding Module Family 42"/>
</dbReference>
<dbReference type="CAZy" id="GH54">
    <property type="family name" value="Glycoside Hydrolase Family 54"/>
</dbReference>
<dbReference type="GlyCosmos" id="Q2UIM2">
    <property type="glycosylation" value="1 site, No reported glycans"/>
</dbReference>
<dbReference type="EnsemblFungi" id="BAE58593">
    <property type="protein sequence ID" value="BAE58593"/>
    <property type="gene ID" value="AO090023000001"/>
</dbReference>
<dbReference type="GeneID" id="5993498"/>
<dbReference type="KEGG" id="aor:AO090023000001"/>
<dbReference type="VEuPathDB" id="FungiDB:AO090023000001"/>
<dbReference type="HOGENOM" id="CLU_029332_3_0_1"/>
<dbReference type="OMA" id="WNYPTRY"/>
<dbReference type="OrthoDB" id="93406at5052"/>
<dbReference type="BRENDA" id="3.2.1.55">
    <property type="organism ID" value="522"/>
</dbReference>
<dbReference type="UniPathway" id="UPA00667"/>
<dbReference type="Proteomes" id="UP000006564">
    <property type="component" value="Chromosome 3"/>
</dbReference>
<dbReference type="GO" id="GO:0005576">
    <property type="term" value="C:extracellular region"/>
    <property type="evidence" value="ECO:0000314"/>
    <property type="project" value="UniProtKB"/>
</dbReference>
<dbReference type="GO" id="GO:0046556">
    <property type="term" value="F:alpha-L-arabinofuranosidase activity"/>
    <property type="evidence" value="ECO:0000314"/>
    <property type="project" value="UniProtKB"/>
</dbReference>
<dbReference type="GO" id="GO:0031222">
    <property type="term" value="P:arabinan catabolic process"/>
    <property type="evidence" value="ECO:0007669"/>
    <property type="project" value="UniProtKB-UniPathway"/>
</dbReference>
<dbReference type="GO" id="GO:0019566">
    <property type="term" value="P:arabinose metabolic process"/>
    <property type="evidence" value="ECO:0000314"/>
    <property type="project" value="UniProtKB"/>
</dbReference>
<dbReference type="GO" id="GO:0046373">
    <property type="term" value="P:L-arabinose metabolic process"/>
    <property type="evidence" value="ECO:0007669"/>
    <property type="project" value="InterPro"/>
</dbReference>
<dbReference type="GO" id="GO:0045490">
    <property type="term" value="P:pectin catabolic process"/>
    <property type="evidence" value="ECO:0007669"/>
    <property type="project" value="TreeGrafter"/>
</dbReference>
<dbReference type="GO" id="GO:0045493">
    <property type="term" value="P:xylan catabolic process"/>
    <property type="evidence" value="ECO:0007669"/>
    <property type="project" value="UniProtKB-KW"/>
</dbReference>
<dbReference type="CDD" id="cd23399">
    <property type="entry name" value="beta-trefoil_ABD_ABFB"/>
    <property type="match status" value="1"/>
</dbReference>
<dbReference type="FunFam" id="2.60.120.200:FF:000131">
    <property type="entry name" value="Probable alpha-L-arabinofuranosidase B"/>
    <property type="match status" value="1"/>
</dbReference>
<dbReference type="FunFam" id="2.80.10.50:FF:000059">
    <property type="entry name" value="Probable alpha-L-arabinofuranosidase B"/>
    <property type="match status" value="1"/>
</dbReference>
<dbReference type="Gene3D" id="2.60.120.200">
    <property type="match status" value="1"/>
</dbReference>
<dbReference type="Gene3D" id="2.80.10.50">
    <property type="match status" value="1"/>
</dbReference>
<dbReference type="InterPro" id="IPR015289">
    <property type="entry name" value="A-L-arabinofuranosidase_B_cat"/>
</dbReference>
<dbReference type="InterPro" id="IPR038964">
    <property type="entry name" value="ABFB"/>
</dbReference>
<dbReference type="InterPro" id="IPR007934">
    <property type="entry name" value="AbfB_ABD"/>
</dbReference>
<dbReference type="InterPro" id="IPR036195">
    <property type="entry name" value="AbfB_ABD_sf"/>
</dbReference>
<dbReference type="InterPro" id="IPR013320">
    <property type="entry name" value="ConA-like_dom_sf"/>
</dbReference>
<dbReference type="PANTHER" id="PTHR39447">
    <property type="entry name" value="ALPHA-L-ARABINOFURANOSIDASE B"/>
    <property type="match status" value="1"/>
</dbReference>
<dbReference type="PANTHER" id="PTHR39447:SF2">
    <property type="entry name" value="ALPHA-L-ARABINOFURANOSIDASE B"/>
    <property type="match status" value="1"/>
</dbReference>
<dbReference type="Pfam" id="PF05270">
    <property type="entry name" value="AbfB"/>
    <property type="match status" value="1"/>
</dbReference>
<dbReference type="Pfam" id="PF09206">
    <property type="entry name" value="ArabFuran-catal"/>
    <property type="match status" value="1"/>
</dbReference>
<dbReference type="SUPFAM" id="SSF110221">
    <property type="entry name" value="AbfB domain"/>
    <property type="match status" value="1"/>
</dbReference>
<dbReference type="SUPFAM" id="SSF49899">
    <property type="entry name" value="Concanavalin A-like lectins/glucanases"/>
    <property type="match status" value="1"/>
</dbReference>
<reference key="1">
    <citation type="journal article" date="2003" name="J. Biosci. Bioeng.">
        <title>Synergistic degradation of arabinoxylan with alpha-L-arabinofuranosidase, xylanase and beta-xylosidase from soy sauce koji mold, Aspergillus oryzae, in high salt condition.</title>
        <authorList>
            <person name="Hashimoto T."/>
            <person name="Nakata Y."/>
        </authorList>
    </citation>
    <scope>NUCLEOTIDE SEQUENCE [GENOMIC DNA]</scope>
    <scope>SUBCELLULAR LOCATION</scope>
    <scope>INDUCTION</scope>
    <scope>FUNCTION</scope>
    <scope>BIOPHYSICOCHEMICAL PROPERTIES</scope>
    <source>
        <strain>ATCC 42149 / RIB 40</strain>
        <strain>HL15</strain>
    </source>
</reference>
<reference key="2">
    <citation type="journal article" date="2005" name="Nature">
        <title>Genome sequencing and analysis of Aspergillus oryzae.</title>
        <authorList>
            <person name="Machida M."/>
            <person name="Asai K."/>
            <person name="Sano M."/>
            <person name="Tanaka T."/>
            <person name="Kumagai T."/>
            <person name="Terai G."/>
            <person name="Kusumoto K."/>
            <person name="Arima T."/>
            <person name="Akita O."/>
            <person name="Kashiwagi Y."/>
            <person name="Abe K."/>
            <person name="Gomi K."/>
            <person name="Horiuchi H."/>
            <person name="Kitamoto K."/>
            <person name="Kobayashi T."/>
            <person name="Takeuchi M."/>
            <person name="Denning D.W."/>
            <person name="Galagan J.E."/>
            <person name="Nierman W.C."/>
            <person name="Yu J."/>
            <person name="Archer D.B."/>
            <person name="Bennett J.W."/>
            <person name="Bhatnagar D."/>
            <person name="Cleveland T.E."/>
            <person name="Fedorova N.D."/>
            <person name="Gotoh O."/>
            <person name="Horikawa H."/>
            <person name="Hosoyama A."/>
            <person name="Ichinomiya M."/>
            <person name="Igarashi R."/>
            <person name="Iwashita K."/>
            <person name="Juvvadi P.R."/>
            <person name="Kato M."/>
            <person name="Kato Y."/>
            <person name="Kin T."/>
            <person name="Kokubun A."/>
            <person name="Maeda H."/>
            <person name="Maeyama N."/>
            <person name="Maruyama J."/>
            <person name="Nagasaki H."/>
            <person name="Nakajima T."/>
            <person name="Oda K."/>
            <person name="Okada K."/>
            <person name="Paulsen I."/>
            <person name="Sakamoto K."/>
            <person name="Sawano T."/>
            <person name="Takahashi M."/>
            <person name="Takase K."/>
            <person name="Terabayashi Y."/>
            <person name="Wortman J.R."/>
            <person name="Yamada O."/>
            <person name="Yamagata Y."/>
            <person name="Anazawa H."/>
            <person name="Hata Y."/>
            <person name="Koide Y."/>
            <person name="Komori T."/>
            <person name="Koyama Y."/>
            <person name="Minetoki T."/>
            <person name="Suharnan S."/>
            <person name="Tanaka A."/>
            <person name="Isono K."/>
            <person name="Kuhara S."/>
            <person name="Ogasawara N."/>
            <person name="Kikuchi H."/>
        </authorList>
    </citation>
    <scope>NUCLEOTIDE SEQUENCE [LARGE SCALE GENOMIC DNA]</scope>
    <source>
        <strain>ATCC 42149 / RIB 40</strain>
    </source>
</reference>
<comment type="function">
    <text evidence="4">Alpha-L-arabinofuranosidase involved in the degradation of arabinoxylan, a major component of plant hemicellulose. Able to hydrolyze 1,5-, 1,3- and 1,2-alpha-linkages not only in L-arabinofuranosyl oligosaccharides, but also in polysaccharides containing terminal non-reducing L-arabinofuranoses in side chains, like L-arabinan, arabinogalactan and arabinoxylan.</text>
</comment>
<comment type="catalytic activity">
    <reaction>
        <text>Hydrolysis of terminal non-reducing alpha-L-arabinofuranoside residues in alpha-L-arabinosides.</text>
        <dbReference type="EC" id="3.2.1.55"/>
    </reaction>
</comment>
<comment type="biophysicochemical properties">
    <phDependence>
        <text evidence="4">Optimum pH is 5.5. Stable between pH 4.0 and 6.5.</text>
    </phDependence>
    <temperatureDependence>
        <text evidence="4">Optimum temperature is 60 degrees Celsius.</text>
    </temperatureDependence>
</comment>
<comment type="pathway">
    <text>Glycan metabolism; L-arabinan degradation.</text>
</comment>
<comment type="subcellular location">
    <subcellularLocation>
        <location evidence="1">Secreted</location>
    </subcellularLocation>
</comment>
<comment type="induction">
    <text evidence="4">Repressed by glucose.</text>
</comment>
<comment type="domain">
    <text evidence="1">Organized into two domains: an N-terminal catalytic domain and a C-terminal arabinose-binding domain (ABD).</text>
</comment>
<comment type="similarity">
    <text evidence="5">Belongs to the glycosyl hydrolase 54 family.</text>
</comment>
<name>ABFB_ASPOR</name>
<gene>
    <name type="primary">abfB</name>
    <name type="ORF">AO090023000001</name>
</gene>
<protein>
    <recommendedName>
        <fullName>Alpha-L-arabinofuranosidase B</fullName>
        <shortName>ABF B</shortName>
        <shortName>Arabinosidase B</shortName>
        <ecNumber>3.2.1.55</ecNumber>
    </recommendedName>
</protein>
<keyword id="KW-0119">Carbohydrate metabolism</keyword>
<keyword id="KW-1015">Disulfide bond</keyword>
<keyword id="KW-0325">Glycoprotein</keyword>
<keyword id="KW-0326">Glycosidase</keyword>
<keyword id="KW-0378">Hydrolase</keyword>
<keyword id="KW-0624">Polysaccharide degradation</keyword>
<keyword id="KW-1185">Reference proteome</keyword>
<keyword id="KW-0964">Secreted</keyword>
<keyword id="KW-0732">Signal</keyword>
<keyword id="KW-0858">Xylan degradation</keyword>
<organism>
    <name type="scientific">Aspergillus oryzae (strain ATCC 42149 / RIB 40)</name>
    <name type="common">Yellow koji mold</name>
    <dbReference type="NCBI Taxonomy" id="510516"/>
    <lineage>
        <taxon>Eukaryota</taxon>
        <taxon>Fungi</taxon>
        <taxon>Dikarya</taxon>
        <taxon>Ascomycota</taxon>
        <taxon>Pezizomycotina</taxon>
        <taxon>Eurotiomycetes</taxon>
        <taxon>Eurotiomycetidae</taxon>
        <taxon>Eurotiales</taxon>
        <taxon>Aspergillaceae</taxon>
        <taxon>Aspergillus</taxon>
        <taxon>Aspergillus subgen. Circumdati</taxon>
    </lineage>
</organism>
<feature type="signal peptide" evidence="3">
    <location>
        <begin position="1"/>
        <end position="26"/>
    </location>
</feature>
<feature type="chain" id="PRO_0000394607" description="Alpha-L-arabinofuranosidase B">
    <location>
        <begin position="27"/>
        <end position="506"/>
    </location>
</feature>
<feature type="region of interest" description="Catalytic" evidence="1">
    <location>
        <begin position="27"/>
        <end position="343"/>
    </location>
</feature>
<feature type="region of interest" description="ABD" evidence="1">
    <location>
        <begin position="344"/>
        <end position="506"/>
    </location>
</feature>
<feature type="active site" description="Nucleophile" evidence="1">
    <location>
        <position position="229"/>
    </location>
</feature>
<feature type="active site" description="Proton donor" evidence="1">
    <location>
        <position position="305"/>
    </location>
</feature>
<feature type="binding site" evidence="2">
    <location>
        <position position="227"/>
    </location>
    <ligand>
        <name>substrate</name>
    </ligand>
</feature>
<feature type="binding site" evidence="2">
    <location>
        <position position="230"/>
    </location>
    <ligand>
        <name>substrate</name>
    </ligand>
</feature>
<feature type="binding site" evidence="2">
    <location>
        <position position="304"/>
    </location>
    <ligand>
        <name>substrate</name>
    </ligand>
</feature>
<feature type="binding site" evidence="2">
    <location>
        <position position="424"/>
    </location>
    <ligand>
        <name>substrate</name>
    </ligand>
</feature>
<feature type="binding site" evidence="2">
    <location>
        <position position="426"/>
    </location>
    <ligand>
        <name>substrate</name>
    </ligand>
</feature>
<feature type="binding site" evidence="2">
    <location>
        <position position="427"/>
    </location>
    <ligand>
        <name>substrate</name>
    </ligand>
</feature>
<feature type="binding site" evidence="2">
    <location>
        <position position="443"/>
    </location>
    <ligand>
        <name>substrate</name>
    </ligand>
</feature>
<feature type="binding site" evidence="2">
    <location>
        <position position="471"/>
    </location>
    <ligand>
        <name>substrate</name>
    </ligand>
</feature>
<feature type="binding site" evidence="2">
    <location>
        <position position="473"/>
    </location>
    <ligand>
        <name>substrate</name>
    </ligand>
</feature>
<feature type="binding site" evidence="2">
    <location>
        <position position="476"/>
    </location>
    <ligand>
        <name>substrate</name>
    </ligand>
</feature>
<feature type="binding site" evidence="2">
    <location>
        <position position="496"/>
    </location>
    <ligand>
        <name>substrate</name>
    </ligand>
</feature>
<feature type="site" description="Cis-peptide bond" evidence="2">
    <location>
        <begin position="184"/>
        <end position="185"/>
    </location>
</feature>
<feature type="glycosylation site" description="N-linked (GlcNAc...) asparagine" evidence="3">
    <location>
        <position position="91"/>
    </location>
</feature>
<feature type="disulfide bond" evidence="2">
    <location>
        <begin position="29"/>
        <end position="39"/>
    </location>
</feature>
<feature type="disulfide bond" evidence="2">
    <location>
        <begin position="89"/>
        <end position="94"/>
    </location>
</feature>
<feature type="disulfide bond" evidence="2">
    <location>
        <begin position="184"/>
        <end position="185"/>
    </location>
</feature>
<feature type="disulfide bond" evidence="2">
    <location>
        <begin position="409"/>
        <end position="447"/>
    </location>
</feature>
<feature type="sequence conflict" description="In Ref. 1; BAB71804." evidence="5" ref="1">
    <original>T</original>
    <variation>A</variation>
    <location>
        <position position="46"/>
    </location>
</feature>
<feature type="sequence conflict" description="In Ref. 1; BAB71803." evidence="5" ref="1">
    <original>I</original>
    <variation>T</variation>
    <location>
        <position position="84"/>
    </location>
</feature>
<feature type="sequence conflict" description="In Ref. 1; BAB71803." evidence="5" ref="1">
    <original>K</original>
    <variation>E</variation>
    <location>
        <position position="167"/>
    </location>
</feature>
<feature type="sequence conflict" description="In Ref. 1; BAB71803." evidence="5" ref="1">
    <original>S</original>
    <variation>T</variation>
    <location>
        <position position="387"/>
    </location>
</feature>
<feature type="sequence conflict" description="In Ref. 1; BAB71803." evidence="5" ref="1">
    <original>T</original>
    <variation>K</variation>
    <location>
        <position position="390"/>
    </location>
</feature>
<feature type="sequence conflict" description="In Ref. 1; BAB71803." evidence="5" ref="1">
    <original>R</original>
    <variation>K</variation>
    <location>
        <position position="393"/>
    </location>
</feature>
<feature type="sequence conflict" description="In Ref. 1; BAB71803." evidence="5" ref="1">
    <original>L</original>
    <variation>F</variation>
    <location>
        <position position="410"/>
    </location>
</feature>
<feature type="sequence conflict" description="In Ref. 1; BAB71803." evidence="5" ref="1">
    <original>L</original>
    <variation>H</variation>
    <location>
        <position position="429"/>
    </location>
</feature>
<evidence type="ECO:0000250" key="1"/>
<evidence type="ECO:0000250" key="2">
    <source>
        <dbReference type="UniProtKB" id="Q8NK89"/>
    </source>
</evidence>
<evidence type="ECO:0000255" key="3"/>
<evidence type="ECO:0000269" key="4">
    <source>
    </source>
</evidence>
<evidence type="ECO:0000305" key="5"/>
<accession>Q2UIM2</accession>
<accession>Q96VA0</accession>
<accession>Q96VA1</accession>
<sequence>MSSGLSLERACAVALGIVASASLVAAGPCDIYSSGGTPCVAAHSTTRALYSAYTGALYQVKRGSDGSTTDIAPLSAGGVADAAIQDSFCANTTCLITIIYDQSGRGNHLTQAPPGGFNGPESNGYDNLASAVGAPVTLNGKKAYGVFMSPGTGYRNNAASGTATGDKAEGMYAVLDGTHYNSACCFDYGNAEVSNTDTGNGHMEAIYYGDNTVWGSGAGSGPWIMADLENGLFSGLSSTNNAGDPSISYRFVTAVVKGEANQWSIRGANAASGSLSTYYSGARPSASGYNPMSKEGAIILGIGGDNSNGAQGTFYEGVMTSGYPSDATENSVQADIVAAKYAIASLTSGPALTVGSSISLQVTTAGYTTRYLAHDGSTVNTQVVSSSSTTALRQQASWTVRTGLANSACLSFESVDTPGSYIRHYNFALLLNANDGTKQFYEDATFCPQAGLNGQGNSIRSWSYPTRYFRHYENVLYVASNGGVQTFDATTSFNDDVSWVVSTGFA</sequence>
<proteinExistence type="evidence at protein level"/>